<reference key="1">
    <citation type="journal article" date="2010" name="PLoS ONE">
        <title>The complete genome sequence of Cupriavidus metallidurans strain CH34, a master survivalist in harsh and anthropogenic environments.</title>
        <authorList>
            <person name="Janssen P.J."/>
            <person name="Van Houdt R."/>
            <person name="Moors H."/>
            <person name="Monsieurs P."/>
            <person name="Morin N."/>
            <person name="Michaux A."/>
            <person name="Benotmane M.A."/>
            <person name="Leys N."/>
            <person name="Vallaeys T."/>
            <person name="Lapidus A."/>
            <person name="Monchy S."/>
            <person name="Medigue C."/>
            <person name="Taghavi S."/>
            <person name="McCorkle S."/>
            <person name="Dunn J."/>
            <person name="van der Lelie D."/>
            <person name="Mergeay M."/>
        </authorList>
    </citation>
    <scope>NUCLEOTIDE SEQUENCE [LARGE SCALE GENOMIC DNA]</scope>
    <source>
        <strain>ATCC 43123 / DSM 2839 / NBRC 102507 / CH34</strain>
    </source>
</reference>
<proteinExistence type="inferred from homology"/>
<keyword id="KW-0997">Cell inner membrane</keyword>
<keyword id="KW-1003">Cell membrane</keyword>
<keyword id="KW-0472">Membrane</keyword>
<keyword id="KW-1185">Reference proteome</keyword>
<keyword id="KW-0808">Transferase</keyword>
<keyword id="KW-0812">Transmembrane</keyword>
<keyword id="KW-1133">Transmembrane helix</keyword>
<protein>
    <recommendedName>
        <fullName evidence="1">Phosphatidylglycerol--prolipoprotein diacylglyceryl transferase</fullName>
        <ecNumber evidence="1">2.5.1.145</ecNumber>
    </recommendedName>
</protein>
<gene>
    <name evidence="1" type="primary">lgt</name>
    <name type="ordered locus">Rmet_2802</name>
</gene>
<sequence>MLVHPQFDPVAIHLGPLAIRWYGLMYLAGFIMFLWFGRLRIRQPHIAARGWVARDLDDMLFYGVLGVILGGRLGYVLFYKPGYYLTHPLEIFKVWEGGMAFHGGFLGVLIAMWVFAKVRRRHWMEVTDFIAPMIPCGLAAGRIGNFINGELWGRPTDLPWGMIFPQAGDNIPRHPSQLYQFAGEGVALFIILWLFSRKPRPMGAVSGVFLIGYGAFRFLAEFAREPDNFLGLLALKLSMGQWLSLPMIVIGAVMVVWAYRRGNGATAAAR</sequence>
<dbReference type="EC" id="2.5.1.145" evidence="1"/>
<dbReference type="EMBL" id="CP000352">
    <property type="protein sequence ID" value="ABF09675.1"/>
    <property type="molecule type" value="Genomic_DNA"/>
</dbReference>
<dbReference type="RefSeq" id="WP_011517371.1">
    <property type="nucleotide sequence ID" value="NC_007973.1"/>
</dbReference>
<dbReference type="SMR" id="Q1LJK1"/>
<dbReference type="STRING" id="266264.Rmet_2802"/>
<dbReference type="KEGG" id="rme:Rmet_2802"/>
<dbReference type="eggNOG" id="COG0682">
    <property type="taxonomic scope" value="Bacteria"/>
</dbReference>
<dbReference type="HOGENOM" id="CLU_013386_1_0_4"/>
<dbReference type="UniPathway" id="UPA00664"/>
<dbReference type="Proteomes" id="UP000002429">
    <property type="component" value="Chromosome"/>
</dbReference>
<dbReference type="GO" id="GO:0005886">
    <property type="term" value="C:plasma membrane"/>
    <property type="evidence" value="ECO:0007669"/>
    <property type="project" value="UniProtKB-SubCell"/>
</dbReference>
<dbReference type="GO" id="GO:0008961">
    <property type="term" value="F:phosphatidylglycerol-prolipoprotein diacylglyceryl transferase activity"/>
    <property type="evidence" value="ECO:0007669"/>
    <property type="project" value="UniProtKB-UniRule"/>
</dbReference>
<dbReference type="GO" id="GO:0042158">
    <property type="term" value="P:lipoprotein biosynthetic process"/>
    <property type="evidence" value="ECO:0007669"/>
    <property type="project" value="UniProtKB-UniRule"/>
</dbReference>
<dbReference type="HAMAP" id="MF_01147">
    <property type="entry name" value="Lgt"/>
    <property type="match status" value="1"/>
</dbReference>
<dbReference type="InterPro" id="IPR001640">
    <property type="entry name" value="Lgt"/>
</dbReference>
<dbReference type="NCBIfam" id="TIGR00544">
    <property type="entry name" value="lgt"/>
    <property type="match status" value="1"/>
</dbReference>
<dbReference type="PANTHER" id="PTHR30589:SF0">
    <property type="entry name" value="PHOSPHATIDYLGLYCEROL--PROLIPOPROTEIN DIACYLGLYCERYL TRANSFERASE"/>
    <property type="match status" value="1"/>
</dbReference>
<dbReference type="PANTHER" id="PTHR30589">
    <property type="entry name" value="PROLIPOPROTEIN DIACYLGLYCERYL TRANSFERASE"/>
    <property type="match status" value="1"/>
</dbReference>
<dbReference type="Pfam" id="PF01790">
    <property type="entry name" value="LGT"/>
    <property type="match status" value="1"/>
</dbReference>
<dbReference type="PROSITE" id="PS01311">
    <property type="entry name" value="LGT"/>
    <property type="match status" value="1"/>
</dbReference>
<name>LGT_CUPMC</name>
<comment type="function">
    <text evidence="1">Catalyzes the transfer of the diacylglyceryl group from phosphatidylglycerol to the sulfhydryl group of the N-terminal cysteine of a prolipoprotein, the first step in the formation of mature lipoproteins.</text>
</comment>
<comment type="catalytic activity">
    <reaction evidence="1">
        <text>L-cysteinyl-[prolipoprotein] + a 1,2-diacyl-sn-glycero-3-phospho-(1'-sn-glycerol) = an S-1,2-diacyl-sn-glyceryl-L-cysteinyl-[prolipoprotein] + sn-glycerol 1-phosphate + H(+)</text>
        <dbReference type="Rhea" id="RHEA:56712"/>
        <dbReference type="Rhea" id="RHEA-COMP:14679"/>
        <dbReference type="Rhea" id="RHEA-COMP:14680"/>
        <dbReference type="ChEBI" id="CHEBI:15378"/>
        <dbReference type="ChEBI" id="CHEBI:29950"/>
        <dbReference type="ChEBI" id="CHEBI:57685"/>
        <dbReference type="ChEBI" id="CHEBI:64716"/>
        <dbReference type="ChEBI" id="CHEBI:140658"/>
        <dbReference type="EC" id="2.5.1.145"/>
    </reaction>
</comment>
<comment type="pathway">
    <text evidence="1">Protein modification; lipoprotein biosynthesis (diacylglyceryl transfer).</text>
</comment>
<comment type="subcellular location">
    <subcellularLocation>
        <location evidence="1">Cell inner membrane</location>
        <topology evidence="1">Multi-pass membrane protein</topology>
    </subcellularLocation>
</comment>
<comment type="similarity">
    <text evidence="1">Belongs to the Lgt family.</text>
</comment>
<evidence type="ECO:0000255" key="1">
    <source>
        <dbReference type="HAMAP-Rule" id="MF_01147"/>
    </source>
</evidence>
<accession>Q1LJK1</accession>
<feature type="chain" id="PRO_1000053485" description="Phosphatidylglycerol--prolipoprotein diacylglyceryl transferase">
    <location>
        <begin position="1"/>
        <end position="270"/>
    </location>
</feature>
<feature type="transmembrane region" description="Helical" evidence="1">
    <location>
        <begin position="17"/>
        <end position="37"/>
    </location>
</feature>
<feature type="transmembrane region" description="Helical" evidence="1">
    <location>
        <begin position="59"/>
        <end position="79"/>
    </location>
</feature>
<feature type="transmembrane region" description="Helical" evidence="1">
    <location>
        <begin position="95"/>
        <end position="115"/>
    </location>
</feature>
<feature type="transmembrane region" description="Helical" evidence="1">
    <location>
        <begin position="129"/>
        <end position="149"/>
    </location>
</feature>
<feature type="transmembrane region" description="Helical" evidence="1">
    <location>
        <begin position="175"/>
        <end position="195"/>
    </location>
</feature>
<feature type="transmembrane region" description="Helical" evidence="1">
    <location>
        <begin position="202"/>
        <end position="222"/>
    </location>
</feature>
<feature type="transmembrane region" description="Helical" evidence="1">
    <location>
        <begin position="237"/>
        <end position="257"/>
    </location>
</feature>
<feature type="binding site" evidence="1">
    <location>
        <position position="142"/>
    </location>
    <ligand>
        <name>a 1,2-diacyl-sn-glycero-3-phospho-(1'-sn-glycerol)</name>
        <dbReference type="ChEBI" id="CHEBI:64716"/>
    </ligand>
</feature>
<organism>
    <name type="scientific">Cupriavidus metallidurans (strain ATCC 43123 / DSM 2839 / NBRC 102507 / CH34)</name>
    <name type="common">Ralstonia metallidurans</name>
    <dbReference type="NCBI Taxonomy" id="266264"/>
    <lineage>
        <taxon>Bacteria</taxon>
        <taxon>Pseudomonadati</taxon>
        <taxon>Pseudomonadota</taxon>
        <taxon>Betaproteobacteria</taxon>
        <taxon>Burkholderiales</taxon>
        <taxon>Burkholderiaceae</taxon>
        <taxon>Cupriavidus</taxon>
    </lineage>
</organism>